<dbReference type="EC" id="2.3.2.27" evidence="1"/>
<dbReference type="EMBL" id="BC080093">
    <property type="protein sequence ID" value="AAH80093.1"/>
    <property type="molecule type" value="mRNA"/>
</dbReference>
<dbReference type="RefSeq" id="NP_001087549.1">
    <property type="nucleotide sequence ID" value="NM_001094080.1"/>
</dbReference>
<dbReference type="RefSeq" id="XP_018122082.1">
    <property type="nucleotide sequence ID" value="XM_018266593.1"/>
</dbReference>
<dbReference type="SMR" id="Q68EV7"/>
<dbReference type="DNASU" id="447373"/>
<dbReference type="GeneID" id="447373"/>
<dbReference type="KEGG" id="xla:447373"/>
<dbReference type="AGR" id="Xenbase:XB-GENE-17338332"/>
<dbReference type="CTD" id="447373"/>
<dbReference type="Xenbase" id="XB-GENE-17338332">
    <property type="gene designation" value="rnf152.L"/>
</dbReference>
<dbReference type="OMA" id="REIRCPW"/>
<dbReference type="OrthoDB" id="6106880at2759"/>
<dbReference type="UniPathway" id="UPA00143"/>
<dbReference type="Proteomes" id="UP000186698">
    <property type="component" value="Chromosome 6L"/>
</dbReference>
<dbReference type="Bgee" id="447373">
    <property type="expression patterns" value="Expressed in lung and 15 other cell types or tissues"/>
</dbReference>
<dbReference type="GO" id="GO:0005765">
    <property type="term" value="C:lysosomal membrane"/>
    <property type="evidence" value="ECO:0000250"/>
    <property type="project" value="UniProtKB"/>
</dbReference>
<dbReference type="GO" id="GO:0005764">
    <property type="term" value="C:lysosome"/>
    <property type="evidence" value="ECO:0000250"/>
    <property type="project" value="UniProtKB"/>
</dbReference>
<dbReference type="GO" id="GO:0031090">
    <property type="term" value="C:organelle membrane"/>
    <property type="evidence" value="ECO:0000250"/>
    <property type="project" value="UniProtKB"/>
</dbReference>
<dbReference type="GO" id="GO:0061630">
    <property type="term" value="F:ubiquitin protein ligase activity"/>
    <property type="evidence" value="ECO:0000318"/>
    <property type="project" value="GO_Central"/>
</dbReference>
<dbReference type="GO" id="GO:0004842">
    <property type="term" value="F:ubiquitin-protein transferase activity"/>
    <property type="evidence" value="ECO:0000250"/>
    <property type="project" value="UniProtKB"/>
</dbReference>
<dbReference type="GO" id="GO:0008270">
    <property type="term" value="F:zinc ion binding"/>
    <property type="evidence" value="ECO:0007669"/>
    <property type="project" value="UniProtKB-KW"/>
</dbReference>
<dbReference type="GO" id="GO:0006915">
    <property type="term" value="P:apoptotic process"/>
    <property type="evidence" value="ECO:0007669"/>
    <property type="project" value="InterPro"/>
</dbReference>
<dbReference type="GO" id="GO:0034198">
    <property type="term" value="P:cellular response to amino acid starvation"/>
    <property type="evidence" value="ECO:0000250"/>
    <property type="project" value="UniProtKB"/>
</dbReference>
<dbReference type="GO" id="GO:1904262">
    <property type="term" value="P:negative regulation of TORC1 signaling"/>
    <property type="evidence" value="ECO:0000250"/>
    <property type="project" value="UniProtKB"/>
</dbReference>
<dbReference type="GO" id="GO:0010508">
    <property type="term" value="P:positive regulation of autophagy"/>
    <property type="evidence" value="ECO:0000250"/>
    <property type="project" value="UniProtKB"/>
</dbReference>
<dbReference type="GO" id="GO:0070936">
    <property type="term" value="P:protein K48-linked ubiquitination"/>
    <property type="evidence" value="ECO:0000250"/>
    <property type="project" value="UniProtKB"/>
</dbReference>
<dbReference type="GO" id="GO:0070534">
    <property type="term" value="P:protein K63-linked ubiquitination"/>
    <property type="evidence" value="ECO:0000250"/>
    <property type="project" value="UniProtKB"/>
</dbReference>
<dbReference type="GO" id="GO:0006513">
    <property type="term" value="P:protein monoubiquitination"/>
    <property type="evidence" value="ECO:0000250"/>
    <property type="project" value="UniProtKB"/>
</dbReference>
<dbReference type="CDD" id="cd16548">
    <property type="entry name" value="RING-HC_RNF152"/>
    <property type="match status" value="1"/>
</dbReference>
<dbReference type="FunFam" id="3.30.40.10:FF:000197">
    <property type="entry name" value="E3 ubiquitin-protein ligase RNF152"/>
    <property type="match status" value="1"/>
</dbReference>
<dbReference type="Gene3D" id="3.30.40.10">
    <property type="entry name" value="Zinc/RING finger domain, C3HC4 (zinc finger)"/>
    <property type="match status" value="1"/>
</dbReference>
<dbReference type="InterPro" id="IPR033609">
    <property type="entry name" value="RING_RNF152"/>
</dbReference>
<dbReference type="InterPro" id="IPR045744">
    <property type="entry name" value="RNF152_C"/>
</dbReference>
<dbReference type="InterPro" id="IPR001841">
    <property type="entry name" value="Znf_RING"/>
</dbReference>
<dbReference type="InterPro" id="IPR013083">
    <property type="entry name" value="Znf_RING/FYVE/PHD"/>
</dbReference>
<dbReference type="PANTHER" id="PTHR25464:SF1">
    <property type="entry name" value="E3 UBIQUITIN-PROTEIN LIGASE RNF152"/>
    <property type="match status" value="1"/>
</dbReference>
<dbReference type="PANTHER" id="PTHR25464">
    <property type="entry name" value="TRIPARTITE MOTIF-CONTAINING PROTEIN 2-LIKE PROTEIN"/>
    <property type="match status" value="1"/>
</dbReference>
<dbReference type="Pfam" id="PF19325">
    <property type="entry name" value="RNF152_C"/>
    <property type="match status" value="1"/>
</dbReference>
<dbReference type="Pfam" id="PF14634">
    <property type="entry name" value="zf-RING_5"/>
    <property type="match status" value="1"/>
</dbReference>
<dbReference type="SMART" id="SM00184">
    <property type="entry name" value="RING"/>
    <property type="match status" value="1"/>
</dbReference>
<dbReference type="SUPFAM" id="SSF57850">
    <property type="entry name" value="RING/U-box"/>
    <property type="match status" value="1"/>
</dbReference>
<dbReference type="PROSITE" id="PS50089">
    <property type="entry name" value="ZF_RING_2"/>
    <property type="match status" value="1"/>
</dbReference>
<proteinExistence type="evidence at transcript level"/>
<reference key="1">
    <citation type="submission" date="2004-08" db="EMBL/GenBank/DDBJ databases">
        <authorList>
            <consortium name="NIH - Xenopus Gene Collection (XGC) project"/>
        </authorList>
    </citation>
    <scope>NUCLEOTIDE SEQUENCE [LARGE SCALE MRNA]</scope>
    <source>
        <tissue>Brain</tissue>
    </source>
</reference>
<protein>
    <recommendedName>
        <fullName evidence="4">E3 ubiquitin-protein ligase rnf152-B</fullName>
        <ecNumber evidence="1">2.3.2.27</ecNumber>
    </recommendedName>
    <alternativeName>
        <fullName evidence="1">RING finger protein 152-B</fullName>
    </alternativeName>
    <alternativeName>
        <fullName evidence="4">RING-type E3 ubiquitin transferase rnf152-A</fullName>
    </alternativeName>
</protein>
<sequence length="203" mass="22607">METLSQDSLLECQICFNYYSPRRRPKLLDCKHTCCSVCLQQMRASQKDLRCPWCRGVTKLPPGYSVSELPDDPDVVAVIAIPHASENTPVFIKLPSNGCYMWPLPVSKERALLPGDIGCRLLPGNQQKPVTVVTMPMEQQPLHGNIPQDIIEEEHERRGVVKSSTWSGVCTVILVACVLVFLLGIVLHNMSCISKRFTVISCG</sequence>
<feature type="chain" id="PRO_0000405839" description="E3 ubiquitin-protein ligase rnf152-B">
    <location>
        <begin position="1"/>
        <end position="203"/>
    </location>
</feature>
<feature type="transmembrane region" description="Helical" evidence="2">
    <location>
        <begin position="167"/>
        <end position="187"/>
    </location>
</feature>
<feature type="zinc finger region" description="RING-type" evidence="3">
    <location>
        <begin position="12"/>
        <end position="55"/>
    </location>
</feature>
<comment type="function">
    <text evidence="1">E3 ubiquitin-protein ligase that acts as a negative regulator of mTORC1 signaling by mediating ubiquitination of RagA/RRAGA and RHEB. Catalyzes 'Lys-63'-linked polyubiquitination of RagA/RRAGA in response to amino acid starvation, thereby regulating mTORC1 signaling. Also mediates monoubiquitination of RHEB, promoting its association with the TSC-TBC complex and subsequent inhibition. Also mediates 'Lys-48'-linked polyubiquitination of target proteins and their subsequent targeting to the proteasome for degradation.</text>
</comment>
<comment type="catalytic activity">
    <reaction evidence="1">
        <text>S-ubiquitinyl-[E2 ubiquitin-conjugating enzyme]-L-cysteine + [acceptor protein]-L-lysine = [E2 ubiquitin-conjugating enzyme]-L-cysteine + N(6)-ubiquitinyl-[acceptor protein]-L-lysine.</text>
        <dbReference type="EC" id="2.3.2.27"/>
    </reaction>
</comment>
<comment type="pathway">
    <text evidence="1">Protein modification; protein ubiquitination.</text>
</comment>
<comment type="subcellular location">
    <subcellularLocation>
        <location evidence="1">Lysosome membrane</location>
        <topology evidence="1">Single-pass membrane protein</topology>
    </subcellularLocation>
</comment>
<comment type="similarity">
    <text evidence="4">Belongs to the RNF152 family.</text>
</comment>
<keyword id="KW-0458">Lysosome</keyword>
<keyword id="KW-0472">Membrane</keyword>
<keyword id="KW-0479">Metal-binding</keyword>
<keyword id="KW-1185">Reference proteome</keyword>
<keyword id="KW-0808">Transferase</keyword>
<keyword id="KW-0812">Transmembrane</keyword>
<keyword id="KW-1133">Transmembrane helix</keyword>
<keyword id="KW-0833">Ubl conjugation pathway</keyword>
<keyword id="KW-0862">Zinc</keyword>
<keyword id="KW-0863">Zinc-finger</keyword>
<name>R152B_XENLA</name>
<accession>Q68EV7</accession>
<organism>
    <name type="scientific">Xenopus laevis</name>
    <name type="common">African clawed frog</name>
    <dbReference type="NCBI Taxonomy" id="8355"/>
    <lineage>
        <taxon>Eukaryota</taxon>
        <taxon>Metazoa</taxon>
        <taxon>Chordata</taxon>
        <taxon>Craniata</taxon>
        <taxon>Vertebrata</taxon>
        <taxon>Euteleostomi</taxon>
        <taxon>Amphibia</taxon>
        <taxon>Batrachia</taxon>
        <taxon>Anura</taxon>
        <taxon>Pipoidea</taxon>
        <taxon>Pipidae</taxon>
        <taxon>Xenopodinae</taxon>
        <taxon>Xenopus</taxon>
        <taxon>Xenopus</taxon>
    </lineage>
</organism>
<evidence type="ECO:0000250" key="1">
    <source>
        <dbReference type="UniProtKB" id="Q8N8N0"/>
    </source>
</evidence>
<evidence type="ECO:0000255" key="2"/>
<evidence type="ECO:0000255" key="3">
    <source>
        <dbReference type="PROSITE-ProRule" id="PRU00175"/>
    </source>
</evidence>
<evidence type="ECO:0000305" key="4"/>
<gene>
    <name evidence="1" type="primary">rnf152-b</name>
</gene>